<protein>
    <recommendedName>
        <fullName>Inositol-1-monophosphatase</fullName>
        <shortName>I-1-Pase</shortName>
        <shortName>IMPase</shortName>
        <shortName>Inositol-1-phosphatase</shortName>
        <ecNumber>3.1.3.25</ecNumber>
    </recommendedName>
</protein>
<organism>
    <name type="scientific">Aeropyrum pernix (strain ATCC 700893 / DSM 11879 / JCM 9820 / NBRC 100138 / K1)</name>
    <dbReference type="NCBI Taxonomy" id="272557"/>
    <lineage>
        <taxon>Archaea</taxon>
        <taxon>Thermoproteota</taxon>
        <taxon>Thermoprotei</taxon>
        <taxon>Desulfurococcales</taxon>
        <taxon>Desulfurococcaceae</taxon>
        <taxon>Aeropyrum</taxon>
    </lineage>
</organism>
<comment type="catalytic activity">
    <reaction>
        <text>a myo-inositol phosphate + H2O = myo-inositol + phosphate</text>
        <dbReference type="Rhea" id="RHEA:24056"/>
        <dbReference type="ChEBI" id="CHEBI:15377"/>
        <dbReference type="ChEBI" id="CHEBI:17268"/>
        <dbReference type="ChEBI" id="CHEBI:43474"/>
        <dbReference type="ChEBI" id="CHEBI:84139"/>
        <dbReference type="EC" id="3.1.3.25"/>
    </reaction>
</comment>
<comment type="cofactor">
    <cofactor evidence="1">
        <name>Mg(2+)</name>
        <dbReference type="ChEBI" id="CHEBI:18420"/>
    </cofactor>
</comment>
<comment type="similarity">
    <text evidence="2">Belongs to the inositol monophosphatase superfamily.</text>
</comment>
<accession>Q9YAZ7</accession>
<feature type="chain" id="PRO_0000142578" description="Inositol-1-monophosphatase">
    <location>
        <begin position="1"/>
        <end position="267"/>
    </location>
</feature>
<feature type="binding site" evidence="1">
    <location>
        <position position="66"/>
    </location>
    <ligand>
        <name>Mg(2+)</name>
        <dbReference type="ChEBI" id="CHEBI:18420"/>
        <label>1</label>
    </ligand>
</feature>
<feature type="binding site" evidence="1">
    <location>
        <position position="66"/>
    </location>
    <ligand>
        <name>substrate</name>
    </ligand>
</feature>
<feature type="binding site" evidence="1">
    <location>
        <position position="84"/>
    </location>
    <ligand>
        <name>Mg(2+)</name>
        <dbReference type="ChEBI" id="CHEBI:18420"/>
        <label>1</label>
    </ligand>
</feature>
<feature type="binding site" evidence="1">
    <location>
        <position position="84"/>
    </location>
    <ligand>
        <name>Mg(2+)</name>
        <dbReference type="ChEBI" id="CHEBI:18420"/>
        <label>2</label>
    </ligand>
</feature>
<feature type="binding site" evidence="1">
    <location>
        <begin position="86"/>
        <end position="89"/>
    </location>
    <ligand>
        <name>substrate</name>
    </ligand>
</feature>
<feature type="binding site" evidence="1">
    <location>
        <position position="86"/>
    </location>
    <ligand>
        <name>Mg(2+)</name>
        <dbReference type="ChEBI" id="CHEBI:18420"/>
        <label>1</label>
    </ligand>
</feature>
<feature type="binding site" evidence="1">
    <location>
        <position position="87"/>
    </location>
    <ligand>
        <name>Mg(2+)</name>
        <dbReference type="ChEBI" id="CHEBI:18420"/>
        <label>2</label>
    </ligand>
</feature>
<feature type="binding site" evidence="1">
    <location>
        <position position="182"/>
    </location>
    <ligand>
        <name>substrate</name>
    </ligand>
</feature>
<feature type="binding site" evidence="1">
    <location>
        <position position="213"/>
    </location>
    <ligand>
        <name>Mg(2+)</name>
        <dbReference type="ChEBI" id="CHEBI:18420"/>
        <label>2</label>
    </ligand>
</feature>
<feature type="binding site" evidence="1">
    <location>
        <position position="213"/>
    </location>
    <ligand>
        <name>substrate</name>
    </ligand>
</feature>
<dbReference type="EC" id="3.1.3.25"/>
<dbReference type="EMBL" id="BA000002">
    <property type="protein sequence ID" value="BAA80801.2"/>
    <property type="molecule type" value="Genomic_DNA"/>
</dbReference>
<dbReference type="PIR" id="D72564">
    <property type="entry name" value="D72564"/>
</dbReference>
<dbReference type="RefSeq" id="WP_010866600.1">
    <property type="nucleotide sequence ID" value="NC_000854.2"/>
</dbReference>
<dbReference type="SMR" id="Q9YAZ7"/>
<dbReference type="STRING" id="272557.APE_1798.1"/>
<dbReference type="EnsemblBacteria" id="BAA80801">
    <property type="protein sequence ID" value="BAA80801"/>
    <property type="gene ID" value="APE_1798.1"/>
</dbReference>
<dbReference type="GeneID" id="1446247"/>
<dbReference type="KEGG" id="ape:APE_1798.1"/>
<dbReference type="eggNOG" id="arCOG01349">
    <property type="taxonomic scope" value="Archaea"/>
</dbReference>
<dbReference type="Proteomes" id="UP000002518">
    <property type="component" value="Chromosome"/>
</dbReference>
<dbReference type="GO" id="GO:0008934">
    <property type="term" value="F:inositol monophosphate 1-phosphatase activity"/>
    <property type="evidence" value="ECO:0007669"/>
    <property type="project" value="TreeGrafter"/>
</dbReference>
<dbReference type="GO" id="GO:0046872">
    <property type="term" value="F:metal ion binding"/>
    <property type="evidence" value="ECO:0007669"/>
    <property type="project" value="UniProtKB-KW"/>
</dbReference>
<dbReference type="GO" id="GO:0006020">
    <property type="term" value="P:inositol metabolic process"/>
    <property type="evidence" value="ECO:0007669"/>
    <property type="project" value="TreeGrafter"/>
</dbReference>
<dbReference type="GO" id="GO:0007165">
    <property type="term" value="P:signal transduction"/>
    <property type="evidence" value="ECO:0007669"/>
    <property type="project" value="TreeGrafter"/>
</dbReference>
<dbReference type="Gene3D" id="3.40.190.80">
    <property type="match status" value="1"/>
</dbReference>
<dbReference type="Gene3D" id="3.30.540.10">
    <property type="entry name" value="Fructose-1,6-Bisphosphatase, subunit A, domain 1"/>
    <property type="match status" value="1"/>
</dbReference>
<dbReference type="InterPro" id="IPR000760">
    <property type="entry name" value="Inositol_monophosphatase-like"/>
</dbReference>
<dbReference type="PANTHER" id="PTHR20854">
    <property type="entry name" value="INOSITOL MONOPHOSPHATASE"/>
    <property type="match status" value="1"/>
</dbReference>
<dbReference type="PANTHER" id="PTHR20854:SF4">
    <property type="entry name" value="INOSITOL-1-MONOPHOSPHATASE-RELATED"/>
    <property type="match status" value="1"/>
</dbReference>
<dbReference type="Pfam" id="PF00459">
    <property type="entry name" value="Inositol_P"/>
    <property type="match status" value="1"/>
</dbReference>
<dbReference type="PRINTS" id="PR00377">
    <property type="entry name" value="IMPHPHTASES"/>
</dbReference>
<dbReference type="SUPFAM" id="SSF56655">
    <property type="entry name" value="Carbohydrate phosphatase"/>
    <property type="match status" value="1"/>
</dbReference>
<name>SUHB_AERPE</name>
<proteinExistence type="inferred from homology"/>
<sequence>MIDAEQLRRVSVKVSSETAGLLRDLACSEDLGRVVSGETTVADKRAEDYILDLLRRELGQVQVISEEAGGVASKTSDAPIALVDPLDGSTNYLSCITWCSVSVAFADPRSGEILAGSVAPVYAGMPVSFARGKGCYHGGLKVEDPSIRGSIISVYVDEPGAIESVAGAIGRLKGVRRDFKVRSLGSAALELAYTAIGYIAVFADLRARLRNIDVAAAVGAVRECGGVVTDAHGQPLRIGVWRVERVGSVVASLDEALARIAVGGGSG</sequence>
<gene>
    <name type="primary">suhB</name>
    <name type="ordered locus">APE_1798.1</name>
</gene>
<reference key="1">
    <citation type="journal article" date="1999" name="DNA Res.">
        <title>Complete genome sequence of an aerobic hyper-thermophilic crenarchaeon, Aeropyrum pernix K1.</title>
        <authorList>
            <person name="Kawarabayasi Y."/>
            <person name="Hino Y."/>
            <person name="Horikawa H."/>
            <person name="Yamazaki S."/>
            <person name="Haikawa Y."/>
            <person name="Jin-no K."/>
            <person name="Takahashi M."/>
            <person name="Sekine M."/>
            <person name="Baba S."/>
            <person name="Ankai A."/>
            <person name="Kosugi H."/>
            <person name="Hosoyama A."/>
            <person name="Fukui S."/>
            <person name="Nagai Y."/>
            <person name="Nishijima K."/>
            <person name="Nakazawa H."/>
            <person name="Takamiya M."/>
            <person name="Masuda S."/>
            <person name="Funahashi T."/>
            <person name="Tanaka T."/>
            <person name="Kudoh Y."/>
            <person name="Yamazaki J."/>
            <person name="Kushida N."/>
            <person name="Oguchi A."/>
            <person name="Aoki K."/>
            <person name="Kubota K."/>
            <person name="Nakamura Y."/>
            <person name="Nomura N."/>
            <person name="Sako Y."/>
            <person name="Kikuchi H."/>
        </authorList>
    </citation>
    <scope>NUCLEOTIDE SEQUENCE [LARGE SCALE GENOMIC DNA]</scope>
    <source>
        <strain>ATCC 700893 / DSM 11879 / JCM 9820 / NBRC 100138 / K1</strain>
    </source>
</reference>
<evidence type="ECO:0000250" key="1"/>
<evidence type="ECO:0000305" key="2"/>
<keyword id="KW-0378">Hydrolase</keyword>
<keyword id="KW-0460">Magnesium</keyword>
<keyword id="KW-0479">Metal-binding</keyword>
<keyword id="KW-1185">Reference proteome</keyword>